<dbReference type="EC" id="3.1.3.95" evidence="1"/>
<dbReference type="EMBL" id="AF073996">
    <property type="protein sequence ID" value="AAC77821.1"/>
    <property type="molecule type" value="mRNA"/>
</dbReference>
<dbReference type="EMBL" id="AL731843">
    <property type="status" value="NOT_ANNOTATED_CDS"/>
    <property type="molecule type" value="Genomic_DNA"/>
</dbReference>
<dbReference type="EMBL" id="AL772294">
    <property type="status" value="NOT_ANNOTATED_CDS"/>
    <property type="molecule type" value="Genomic_DNA"/>
</dbReference>
<dbReference type="EMBL" id="BC090984">
    <property type="protein sequence ID" value="AAH90984.1"/>
    <property type="molecule type" value="mRNA"/>
</dbReference>
<dbReference type="CCDS" id="CCDS30177.1"/>
<dbReference type="RefSeq" id="NP_001157662.1">
    <property type="nucleotide sequence ID" value="NM_001164190.2"/>
</dbReference>
<dbReference type="RefSeq" id="NP_001157663.1">
    <property type="nucleotide sequence ID" value="NM_001164191.2"/>
</dbReference>
<dbReference type="RefSeq" id="NP_001157664.1">
    <property type="nucleotide sequence ID" value="NM_001164192.1"/>
</dbReference>
<dbReference type="RefSeq" id="NP_064310.2">
    <property type="nucleotide sequence ID" value="NM_019926.5"/>
</dbReference>
<dbReference type="SMR" id="Q9Z2C5"/>
<dbReference type="BioGRID" id="201597">
    <property type="interactions" value="9"/>
</dbReference>
<dbReference type="FunCoup" id="Q9Z2C5">
    <property type="interactions" value="1132"/>
</dbReference>
<dbReference type="IntAct" id="Q9Z2C5">
    <property type="interactions" value="4"/>
</dbReference>
<dbReference type="MINT" id="Q9Z2C5"/>
<dbReference type="STRING" id="10090.ENSMUSP00000125798"/>
<dbReference type="iPTMnet" id="Q9Z2C5"/>
<dbReference type="PhosphoSitePlus" id="Q9Z2C5"/>
<dbReference type="PaxDb" id="10090-ENSMUSP00000099040"/>
<dbReference type="ProteomicsDB" id="290111"/>
<dbReference type="Pumba" id="Q9Z2C5"/>
<dbReference type="Antibodypedia" id="544">
    <property type="antibodies" value="317 antibodies from 35 providers"/>
</dbReference>
<dbReference type="DNASU" id="17772"/>
<dbReference type="Ensembl" id="ENSMUST00000033700.12">
    <property type="protein sequence ID" value="ENSMUSP00000033700.6"/>
    <property type="gene ID" value="ENSMUSG00000031337.17"/>
</dbReference>
<dbReference type="Ensembl" id="ENSMUST00000061970.12">
    <property type="protein sequence ID" value="ENSMUSP00000057182.6"/>
    <property type="gene ID" value="ENSMUSG00000031337.17"/>
</dbReference>
<dbReference type="Ensembl" id="ENSMUST00000114617.2">
    <property type="protein sequence ID" value="ENSMUSP00000110264.2"/>
    <property type="gene ID" value="ENSMUSG00000031337.17"/>
</dbReference>
<dbReference type="Ensembl" id="ENSMUST00000171933.8">
    <property type="protein sequence ID" value="ENSMUSP00000125798.2"/>
    <property type="gene ID" value="ENSMUSG00000031337.17"/>
</dbReference>
<dbReference type="GeneID" id="17772"/>
<dbReference type="KEGG" id="mmu:17772"/>
<dbReference type="UCSC" id="uc009tjq.2">
    <property type="organism name" value="mouse"/>
</dbReference>
<dbReference type="AGR" id="MGI:1099452"/>
<dbReference type="CTD" id="4534"/>
<dbReference type="MGI" id="MGI:1099452">
    <property type="gene designation" value="Mtm1"/>
</dbReference>
<dbReference type="VEuPathDB" id="HostDB:ENSMUSG00000031337"/>
<dbReference type="eggNOG" id="KOG4471">
    <property type="taxonomic scope" value="Eukaryota"/>
</dbReference>
<dbReference type="GeneTree" id="ENSGT00940000157029"/>
<dbReference type="HOGENOM" id="CLU_001839_4_1_1"/>
<dbReference type="InParanoid" id="Q9Z2C5"/>
<dbReference type="OMA" id="PFRATDE"/>
<dbReference type="OrthoDB" id="271628at2759"/>
<dbReference type="PhylomeDB" id="Q9Z2C5"/>
<dbReference type="Reactome" id="R-MMU-1660499">
    <property type="pathway name" value="Synthesis of PIPs at the plasma membrane"/>
</dbReference>
<dbReference type="Reactome" id="R-MMU-1660516">
    <property type="pathway name" value="Synthesis of PIPs at the early endosome membrane"/>
</dbReference>
<dbReference type="Reactome" id="R-MMU-1660517">
    <property type="pathway name" value="Synthesis of PIPs at the late endosome membrane"/>
</dbReference>
<dbReference type="BioGRID-ORCS" id="17772">
    <property type="hits" value="1 hit in 81 CRISPR screens"/>
</dbReference>
<dbReference type="ChiTaRS" id="Mtm1">
    <property type="organism name" value="mouse"/>
</dbReference>
<dbReference type="PRO" id="PR:Q9Z2C5"/>
<dbReference type="Proteomes" id="UP000000589">
    <property type="component" value="Chromosome X"/>
</dbReference>
<dbReference type="RNAct" id="Q9Z2C5">
    <property type="molecule type" value="protein"/>
</dbReference>
<dbReference type="Bgee" id="ENSMUSG00000031337">
    <property type="expression patterns" value="Expressed in left colon and 235 other cell types or tissues"/>
</dbReference>
<dbReference type="ExpressionAtlas" id="Q9Z2C5">
    <property type="expression patterns" value="baseline and differential"/>
</dbReference>
<dbReference type="GO" id="GO:0005737">
    <property type="term" value="C:cytoplasm"/>
    <property type="evidence" value="ECO:0000314"/>
    <property type="project" value="UniProtKB"/>
</dbReference>
<dbReference type="GO" id="GO:0005829">
    <property type="term" value="C:cytosol"/>
    <property type="evidence" value="ECO:0007669"/>
    <property type="project" value="Ensembl"/>
</dbReference>
<dbReference type="GO" id="GO:0030175">
    <property type="term" value="C:filopodium"/>
    <property type="evidence" value="ECO:0000250"/>
    <property type="project" value="UniProtKB"/>
</dbReference>
<dbReference type="GO" id="GO:0031674">
    <property type="term" value="C:I band"/>
    <property type="evidence" value="ECO:0000314"/>
    <property type="project" value="MGI"/>
</dbReference>
<dbReference type="GO" id="GO:0005770">
    <property type="term" value="C:late endosome"/>
    <property type="evidence" value="ECO:0000250"/>
    <property type="project" value="UniProtKB"/>
</dbReference>
<dbReference type="GO" id="GO:0005886">
    <property type="term" value="C:plasma membrane"/>
    <property type="evidence" value="ECO:0000250"/>
    <property type="project" value="UniProtKB"/>
</dbReference>
<dbReference type="GO" id="GO:0001726">
    <property type="term" value="C:ruffle"/>
    <property type="evidence" value="ECO:0000250"/>
    <property type="project" value="UniProtKB"/>
</dbReference>
<dbReference type="GO" id="GO:0019215">
    <property type="term" value="F:intermediate filament binding"/>
    <property type="evidence" value="ECO:0000250"/>
    <property type="project" value="UniProtKB"/>
</dbReference>
<dbReference type="GO" id="GO:0035091">
    <property type="term" value="F:phosphatidylinositol binding"/>
    <property type="evidence" value="ECO:0000250"/>
    <property type="project" value="UniProtKB"/>
</dbReference>
<dbReference type="GO" id="GO:0052629">
    <property type="term" value="F:phosphatidylinositol-3,5-bisphosphate 3-phosphatase activity"/>
    <property type="evidence" value="ECO:0000250"/>
    <property type="project" value="UniProtKB"/>
</dbReference>
<dbReference type="GO" id="GO:0004438">
    <property type="term" value="F:phosphatidylinositol-3-phosphate phosphatase activity"/>
    <property type="evidence" value="ECO:0000250"/>
    <property type="project" value="UniProtKB"/>
</dbReference>
<dbReference type="GO" id="GO:0004721">
    <property type="term" value="F:phosphoprotein phosphatase activity"/>
    <property type="evidence" value="ECO:0000250"/>
    <property type="project" value="UniProtKB"/>
</dbReference>
<dbReference type="GO" id="GO:0000045">
    <property type="term" value="P:autophagosome assembly"/>
    <property type="evidence" value="ECO:0000315"/>
    <property type="project" value="MGI"/>
</dbReference>
<dbReference type="GO" id="GO:0008333">
    <property type="term" value="P:endosome to lysosome transport"/>
    <property type="evidence" value="ECO:0000250"/>
    <property type="project" value="UniProtKB"/>
</dbReference>
<dbReference type="GO" id="GO:0045109">
    <property type="term" value="P:intermediate filament organization"/>
    <property type="evidence" value="ECO:0000250"/>
    <property type="project" value="UniProtKB"/>
</dbReference>
<dbReference type="GO" id="GO:0048311">
    <property type="term" value="P:mitochondrion distribution"/>
    <property type="evidence" value="ECO:0000315"/>
    <property type="project" value="UniProtKB"/>
</dbReference>
<dbReference type="GO" id="GO:0007005">
    <property type="term" value="P:mitochondrion organization"/>
    <property type="evidence" value="ECO:0000315"/>
    <property type="project" value="UniProtKB"/>
</dbReference>
<dbReference type="GO" id="GO:0046716">
    <property type="term" value="P:muscle cell cellular homeostasis"/>
    <property type="evidence" value="ECO:0000315"/>
    <property type="project" value="CACAO"/>
</dbReference>
<dbReference type="GO" id="GO:1902902">
    <property type="term" value="P:negative regulation of autophagosome assembly"/>
    <property type="evidence" value="ECO:0000315"/>
    <property type="project" value="MGI"/>
</dbReference>
<dbReference type="GO" id="GO:0051898">
    <property type="term" value="P:negative regulation of phosphatidylinositol 3-kinase/protein kinase B signal transduction"/>
    <property type="evidence" value="ECO:0000315"/>
    <property type="project" value="MGI"/>
</dbReference>
<dbReference type="GO" id="GO:0032435">
    <property type="term" value="P:negative regulation of proteasomal ubiquitin-dependent protein catabolic process"/>
    <property type="evidence" value="ECO:0000315"/>
    <property type="project" value="MGI"/>
</dbReference>
<dbReference type="GO" id="GO:0032007">
    <property type="term" value="P:negative regulation of TOR signaling"/>
    <property type="evidence" value="ECO:0000315"/>
    <property type="project" value="MGI"/>
</dbReference>
<dbReference type="GO" id="GO:0043491">
    <property type="term" value="P:phosphatidylinositol 3-kinase/protein kinase B signal transduction"/>
    <property type="evidence" value="ECO:0000315"/>
    <property type="project" value="MGI"/>
</dbReference>
<dbReference type="GO" id="GO:0046856">
    <property type="term" value="P:phosphatidylinositol dephosphorylation"/>
    <property type="evidence" value="ECO:0000250"/>
    <property type="project" value="UniProtKB"/>
</dbReference>
<dbReference type="GO" id="GO:0048633">
    <property type="term" value="P:positive regulation of skeletal muscle tissue growth"/>
    <property type="evidence" value="ECO:0000315"/>
    <property type="project" value="MGI"/>
</dbReference>
<dbReference type="GO" id="GO:0043161">
    <property type="term" value="P:proteasome-mediated ubiquitin-dependent protein catabolic process"/>
    <property type="evidence" value="ECO:0000315"/>
    <property type="project" value="MGI"/>
</dbReference>
<dbReference type="GO" id="GO:0006470">
    <property type="term" value="P:protein dephosphorylation"/>
    <property type="evidence" value="ECO:0000250"/>
    <property type="project" value="UniProtKB"/>
</dbReference>
<dbReference type="GO" id="GO:0015031">
    <property type="term" value="P:protein transport"/>
    <property type="evidence" value="ECO:0007669"/>
    <property type="project" value="UniProtKB-KW"/>
</dbReference>
<dbReference type="GO" id="GO:0044088">
    <property type="term" value="P:regulation of vacuole organization"/>
    <property type="evidence" value="ECO:0000250"/>
    <property type="project" value="UniProtKB"/>
</dbReference>
<dbReference type="GO" id="GO:0048630">
    <property type="term" value="P:skeletal muscle tissue growth"/>
    <property type="evidence" value="ECO:0000315"/>
    <property type="project" value="MGI"/>
</dbReference>
<dbReference type="GO" id="GO:0031929">
    <property type="term" value="P:TOR signaling"/>
    <property type="evidence" value="ECO:0000315"/>
    <property type="project" value="MGI"/>
</dbReference>
<dbReference type="CDD" id="cd14591">
    <property type="entry name" value="PTP-MTM1"/>
    <property type="match status" value="1"/>
</dbReference>
<dbReference type="FunFam" id="2.30.29.30:FF:000038">
    <property type="entry name" value="Myotubularin 1, isoform CRA_a"/>
    <property type="match status" value="1"/>
</dbReference>
<dbReference type="Gene3D" id="2.30.29.30">
    <property type="entry name" value="Pleckstrin-homology domain (PH domain)/Phosphotyrosine-binding domain (PTB)"/>
    <property type="match status" value="1"/>
</dbReference>
<dbReference type="InterPro" id="IPR004182">
    <property type="entry name" value="GRAM"/>
</dbReference>
<dbReference type="InterPro" id="IPR030564">
    <property type="entry name" value="Myotubularin"/>
</dbReference>
<dbReference type="InterPro" id="IPR010569">
    <property type="entry name" value="Myotubularin-like_Pase_dom"/>
</dbReference>
<dbReference type="InterPro" id="IPR011993">
    <property type="entry name" value="PH-like_dom_sf"/>
</dbReference>
<dbReference type="InterPro" id="IPR029021">
    <property type="entry name" value="Prot-tyrosine_phosphatase-like"/>
</dbReference>
<dbReference type="InterPro" id="IPR016130">
    <property type="entry name" value="Tyr_Pase_AS"/>
</dbReference>
<dbReference type="InterPro" id="IPR003595">
    <property type="entry name" value="Tyr_Pase_cat"/>
</dbReference>
<dbReference type="InterPro" id="IPR000387">
    <property type="entry name" value="Tyr_Pase_dom"/>
</dbReference>
<dbReference type="PANTHER" id="PTHR10807:SF69">
    <property type="entry name" value="MYOTUBULARIN"/>
    <property type="match status" value="1"/>
</dbReference>
<dbReference type="PANTHER" id="PTHR10807">
    <property type="entry name" value="MYOTUBULARIN-RELATED"/>
    <property type="match status" value="1"/>
</dbReference>
<dbReference type="Pfam" id="PF02893">
    <property type="entry name" value="GRAM"/>
    <property type="match status" value="1"/>
</dbReference>
<dbReference type="Pfam" id="PF06602">
    <property type="entry name" value="Myotub-related"/>
    <property type="match status" value="1"/>
</dbReference>
<dbReference type="SMART" id="SM00568">
    <property type="entry name" value="GRAM"/>
    <property type="match status" value="1"/>
</dbReference>
<dbReference type="SMART" id="SM00404">
    <property type="entry name" value="PTPc_motif"/>
    <property type="match status" value="1"/>
</dbReference>
<dbReference type="SUPFAM" id="SSF52799">
    <property type="entry name" value="(Phosphotyrosine protein) phosphatases II"/>
    <property type="match status" value="1"/>
</dbReference>
<dbReference type="SUPFAM" id="SSF50729">
    <property type="entry name" value="PH domain-like"/>
    <property type="match status" value="1"/>
</dbReference>
<dbReference type="PROSITE" id="PS51339">
    <property type="entry name" value="PPASE_MYOTUBULARIN"/>
    <property type="match status" value="1"/>
</dbReference>
<dbReference type="PROSITE" id="PS00383">
    <property type="entry name" value="TYR_PHOSPHATASE_1"/>
    <property type="match status" value="1"/>
</dbReference>
<dbReference type="PROSITE" id="PS50056">
    <property type="entry name" value="TYR_PHOSPHATASE_2"/>
    <property type="match status" value="1"/>
</dbReference>
<accession>Q9Z2C5</accession>
<accession>Q5BKQ5</accession>
<keyword id="KW-1003">Cell membrane</keyword>
<keyword id="KW-0966">Cell projection</keyword>
<keyword id="KW-0963">Cytoplasm</keyword>
<keyword id="KW-0967">Endosome</keyword>
<keyword id="KW-0378">Hydrolase</keyword>
<keyword id="KW-0443">Lipid metabolism</keyword>
<keyword id="KW-0472">Membrane</keyword>
<keyword id="KW-0597">Phosphoprotein</keyword>
<keyword id="KW-0904">Protein phosphatase</keyword>
<keyword id="KW-0653">Protein transport</keyword>
<keyword id="KW-1185">Reference proteome</keyword>
<keyword id="KW-0813">Transport</keyword>
<evidence type="ECO:0000250" key="1">
    <source>
        <dbReference type="UniProtKB" id="Q13496"/>
    </source>
</evidence>
<evidence type="ECO:0000250" key="2">
    <source>
        <dbReference type="UniProtKB" id="Q13614"/>
    </source>
</evidence>
<evidence type="ECO:0000255" key="3">
    <source>
        <dbReference type="PROSITE-ProRule" id="PRU00669"/>
    </source>
</evidence>
<evidence type="ECO:0000255" key="4">
    <source>
        <dbReference type="PROSITE-ProRule" id="PRU10044"/>
    </source>
</evidence>
<evidence type="ECO:0000269" key="5">
    <source>
    </source>
</evidence>
<evidence type="ECO:0000269" key="6">
    <source>
    </source>
</evidence>
<evidence type="ECO:0000269" key="7">
    <source>
    </source>
</evidence>
<evidence type="ECO:0000269" key="8">
    <source>
    </source>
</evidence>
<evidence type="ECO:0000303" key="9">
    <source>
    </source>
</evidence>
<evidence type="ECO:0000305" key="10"/>
<evidence type="ECO:0000312" key="11">
    <source>
        <dbReference type="MGI" id="MGI:1099452"/>
    </source>
</evidence>
<reference key="1">
    <citation type="journal article" date="1998" name="Hum. Mol. Genet.">
        <title>Characterization of the myotubularin dual specificity phosphatase gene family from yeast to human.</title>
        <authorList>
            <person name="Laporte J."/>
            <person name="Blondeau F."/>
            <person name="Buj-Bello A."/>
            <person name="Tentler D."/>
            <person name="Kretz C."/>
            <person name="Dahl N."/>
            <person name="Mandel J.-L."/>
        </authorList>
    </citation>
    <scope>NUCLEOTIDE SEQUENCE [MRNA]</scope>
</reference>
<reference key="2">
    <citation type="journal article" date="2009" name="PLoS Biol.">
        <title>Lineage-specific biology revealed by a finished genome assembly of the mouse.</title>
        <authorList>
            <person name="Church D.M."/>
            <person name="Goodstadt L."/>
            <person name="Hillier L.W."/>
            <person name="Zody M.C."/>
            <person name="Goldstein S."/>
            <person name="She X."/>
            <person name="Bult C.J."/>
            <person name="Agarwala R."/>
            <person name="Cherry J.L."/>
            <person name="DiCuccio M."/>
            <person name="Hlavina W."/>
            <person name="Kapustin Y."/>
            <person name="Meric P."/>
            <person name="Maglott D."/>
            <person name="Birtle Z."/>
            <person name="Marques A.C."/>
            <person name="Graves T."/>
            <person name="Zhou S."/>
            <person name="Teague B."/>
            <person name="Potamousis K."/>
            <person name="Churas C."/>
            <person name="Place M."/>
            <person name="Herschleb J."/>
            <person name="Runnheim R."/>
            <person name="Forrest D."/>
            <person name="Amos-Landgraf J."/>
            <person name="Schwartz D.C."/>
            <person name="Cheng Z."/>
            <person name="Lindblad-Toh K."/>
            <person name="Eichler E.E."/>
            <person name="Ponting C.P."/>
        </authorList>
    </citation>
    <scope>NUCLEOTIDE SEQUENCE [LARGE SCALE GENOMIC DNA]</scope>
    <source>
        <strain>C57BL/6J</strain>
    </source>
</reference>
<reference key="3">
    <citation type="journal article" date="2004" name="Genome Res.">
        <title>The status, quality, and expansion of the NIH full-length cDNA project: the Mammalian Gene Collection (MGC).</title>
        <authorList>
            <consortium name="The MGC Project Team"/>
        </authorList>
    </citation>
    <scope>NUCLEOTIDE SEQUENCE [LARGE SCALE MRNA]</scope>
    <source>
        <strain>CD-1</strain>
        <tissue>Pituitary</tissue>
    </source>
</reference>
<reference key="4">
    <citation type="journal article" date="2002" name="J. Cell Sci.">
        <title>The PtdIns3P phosphatase myotubularin is a cytoplasmic protein that also localizes to Rac1-inducible plasma membrane ruffles.</title>
        <authorList>
            <person name="Laporte J."/>
            <person name="Blondeau F."/>
            <person name="Gansmuller A."/>
            <person name="Lutz Y."/>
            <person name="Vonesch J.L."/>
            <person name="Mandel J.L."/>
        </authorList>
    </citation>
    <scope>SUBCELLULAR LOCATION</scope>
    <scope>TISSUE SPECIFICITY</scope>
</reference>
<reference key="5">
    <citation type="journal article" date="2002" name="Proc. Natl. Acad. Sci. U.S.A.">
        <title>The lipid phosphatase myotubularin is essential for skeletal muscle maintenance but not for myogenesis in mice.</title>
        <authorList>
            <person name="Buj-Bello A."/>
            <person name="Laugel V."/>
            <person name="Messaddeq N."/>
            <person name="Zahreddine H."/>
            <person name="Laporte J."/>
            <person name="Pellissier J.F."/>
            <person name="Mandel J.L."/>
        </authorList>
    </citation>
    <scope>FUNCTION</scope>
    <scope>DISRUPTION PHENOTYPE</scope>
</reference>
<reference key="6">
    <citation type="journal article" date="2010" name="Cell">
        <title>A tissue-specific atlas of mouse protein phosphorylation and expression.</title>
        <authorList>
            <person name="Huttlin E.L."/>
            <person name="Jedrychowski M.P."/>
            <person name="Elias J.E."/>
            <person name="Goswami T."/>
            <person name="Rad R."/>
            <person name="Beausoleil S.A."/>
            <person name="Villen J."/>
            <person name="Haas W."/>
            <person name="Sowa M.E."/>
            <person name="Gygi S.P."/>
        </authorList>
    </citation>
    <scope>IDENTIFICATION BY MASS SPECTROMETRY [LARGE SCALE ANALYSIS]</scope>
    <source>
        <tissue>Brown adipose tissue</tissue>
        <tissue>Heart</tissue>
        <tissue>Kidney</tissue>
        <tissue>Liver</tissue>
        <tissue>Lung</tissue>
        <tissue>Pancreas</tissue>
        <tissue>Spleen</tissue>
    </source>
</reference>
<reference key="7">
    <citation type="journal article" date="2011" name="J. Clin. Invest.">
        <title>Myotubularin controls desmin intermediate filament architecture and mitochondrial dynamics in human and mouse skeletal muscle.</title>
        <authorList>
            <person name="Hnia K."/>
            <person name="Tronchere H."/>
            <person name="Tomczak K.K."/>
            <person name="Amoasii L."/>
            <person name="Schultz P."/>
            <person name="Beggs A.H."/>
            <person name="Payrastre B."/>
            <person name="Mandel J.L."/>
            <person name="Laporte J."/>
        </authorList>
    </citation>
    <scope>FUNCTION</scope>
    <scope>INTERACTION WITH DES</scope>
    <scope>DISRUPTION PHENOTYPE</scope>
</reference>
<reference key="8">
    <citation type="journal article" date="2013" name="PLoS Genet.">
        <title>Loss of catalytically inactive lipid phosphatase myotubularin-related protein 12 impairs myotubularin stability and promotes centronuclear myopathy in zebrafish.</title>
        <authorList>
            <person name="Gupta V.A."/>
            <person name="Hnia K."/>
            <person name="Smith L.L."/>
            <person name="Gundry S.R."/>
            <person name="McIntire J.E."/>
            <person name="Shimazu J."/>
            <person name="Bass J.R."/>
            <person name="Talbot E.A."/>
            <person name="Amoasii L."/>
            <person name="Goldman N.E."/>
            <person name="Laporte J."/>
            <person name="Beggs A.H."/>
        </authorList>
    </citation>
    <scope>FUNCTION</scope>
    <scope>INTERACTION WITH MTMR12</scope>
    <scope>SUBCELLULAR LOCATION</scope>
    <scope>TISSUE SPECIFICITY</scope>
    <scope>DEVELOPMENTAL STAGE</scope>
</reference>
<protein>
    <recommendedName>
        <fullName evidence="9">Myotubularin</fullName>
        <ecNumber evidence="1">3.1.3.95</ecNumber>
    </recommendedName>
    <alternativeName>
        <fullName evidence="1">Phosphatidylinositol-3,5-bisphosphate 3-phosphatase</fullName>
    </alternativeName>
    <alternativeName>
        <fullName evidence="1">Phosphatidylinositol-3-phosphate phosphatase</fullName>
    </alternativeName>
</protein>
<feature type="chain" id="PRO_0000094931" description="Myotubularin">
    <location>
        <begin position="1"/>
        <end position="603"/>
    </location>
</feature>
<feature type="domain" description="GRAM">
    <location>
        <begin position="29"/>
        <end position="97"/>
    </location>
</feature>
<feature type="domain" description="Myotubularin phosphatase" evidence="3">
    <location>
        <begin position="163"/>
        <end position="538"/>
    </location>
</feature>
<feature type="active site" description="Phosphocysteine intermediate" evidence="4">
    <location>
        <position position="375"/>
    </location>
</feature>
<feature type="binding site" evidence="2">
    <location>
        <position position="288"/>
    </location>
    <ligand>
        <name>a 1,2-diacyl-sn-glycero-3-phospho-(1D-myo-inositol-3,5-bisphosphate)</name>
        <dbReference type="ChEBI" id="CHEBI:57923"/>
    </ligand>
</feature>
<feature type="binding site" evidence="2">
    <location>
        <position position="288"/>
    </location>
    <ligand>
        <name>a 1,2-diacyl-sn-glycero-3-phospho-(1D-myo-inositol-3-phosphate)</name>
        <dbReference type="ChEBI" id="CHEBI:58088"/>
    </ligand>
</feature>
<feature type="binding site" evidence="2">
    <location>
        <position position="313"/>
    </location>
    <ligand>
        <name>a 1,2-diacyl-sn-glycero-3-phospho-(1D-myo-inositol-3,5-bisphosphate)</name>
        <dbReference type="ChEBI" id="CHEBI:57923"/>
    </ligand>
</feature>
<feature type="binding site" evidence="2">
    <location>
        <position position="313"/>
    </location>
    <ligand>
        <name>a 1,2-diacyl-sn-glycero-3-phospho-(1D-myo-inositol-3-phosphate)</name>
        <dbReference type="ChEBI" id="CHEBI:58088"/>
    </ligand>
</feature>
<feature type="binding site" evidence="2">
    <location>
        <position position="314"/>
    </location>
    <ligand>
        <name>a 1,2-diacyl-sn-glycero-3-phospho-(1D-myo-inositol-3,5-bisphosphate)</name>
        <dbReference type="ChEBI" id="CHEBI:57923"/>
    </ligand>
</feature>
<feature type="binding site" evidence="2">
    <location>
        <position position="314"/>
    </location>
    <ligand>
        <name>a 1,2-diacyl-sn-glycero-3-phospho-(1D-myo-inositol-3-phosphate)</name>
        <dbReference type="ChEBI" id="CHEBI:58088"/>
    </ligand>
</feature>
<feature type="binding site" evidence="2">
    <location>
        <position position="376"/>
    </location>
    <ligand>
        <name>a 1,2-diacyl-sn-glycero-3-phospho-(1D-myo-inositol-3,5-bisphosphate)</name>
        <dbReference type="ChEBI" id="CHEBI:57923"/>
    </ligand>
</feature>
<feature type="binding site" evidence="2">
    <location>
        <position position="376"/>
    </location>
    <ligand>
        <name>a 1,2-diacyl-sn-glycero-3-phospho-(1D-myo-inositol-3-phosphate)</name>
        <dbReference type="ChEBI" id="CHEBI:58088"/>
    </ligand>
</feature>
<feature type="binding site" evidence="2">
    <location>
        <position position="377"/>
    </location>
    <ligand>
        <name>a 1,2-diacyl-sn-glycero-3-phospho-(1D-myo-inositol-3,5-bisphosphate)</name>
        <dbReference type="ChEBI" id="CHEBI:57923"/>
    </ligand>
</feature>
<feature type="binding site" evidence="2">
    <location>
        <position position="377"/>
    </location>
    <ligand>
        <name>a 1,2-diacyl-sn-glycero-3-phospho-(1D-myo-inositol-3-phosphate)</name>
        <dbReference type="ChEBI" id="CHEBI:58088"/>
    </ligand>
</feature>
<feature type="binding site" evidence="2">
    <location>
        <position position="378"/>
    </location>
    <ligand>
        <name>a 1,2-diacyl-sn-glycero-3-phospho-(1D-myo-inositol-3,5-bisphosphate)</name>
        <dbReference type="ChEBI" id="CHEBI:57923"/>
    </ligand>
</feature>
<feature type="binding site" evidence="2">
    <location>
        <position position="378"/>
    </location>
    <ligand>
        <name>a 1,2-diacyl-sn-glycero-3-phospho-(1D-myo-inositol-3-phosphate)</name>
        <dbReference type="ChEBI" id="CHEBI:58088"/>
    </ligand>
</feature>
<feature type="binding site" evidence="2">
    <location>
        <position position="379"/>
    </location>
    <ligand>
        <name>a 1,2-diacyl-sn-glycero-3-phospho-(1D-myo-inositol-3,5-bisphosphate)</name>
        <dbReference type="ChEBI" id="CHEBI:57923"/>
    </ligand>
</feature>
<feature type="binding site" evidence="2">
    <location>
        <position position="379"/>
    </location>
    <ligand>
        <name>a 1,2-diacyl-sn-glycero-3-phospho-(1D-myo-inositol-3-phosphate)</name>
        <dbReference type="ChEBI" id="CHEBI:58088"/>
    </ligand>
</feature>
<feature type="binding site" evidence="2">
    <location>
        <position position="380"/>
    </location>
    <ligand>
        <name>a 1,2-diacyl-sn-glycero-3-phospho-(1D-myo-inositol-3,5-bisphosphate)</name>
        <dbReference type="ChEBI" id="CHEBI:57923"/>
    </ligand>
</feature>
<feature type="binding site" evidence="2">
    <location>
        <position position="380"/>
    </location>
    <ligand>
        <name>a 1,2-diacyl-sn-glycero-3-phospho-(1D-myo-inositol-3-phosphate)</name>
        <dbReference type="ChEBI" id="CHEBI:58088"/>
    </ligand>
</feature>
<feature type="binding site" evidence="2">
    <location>
        <position position="381"/>
    </location>
    <ligand>
        <name>a 1,2-diacyl-sn-glycero-3-phospho-(1D-myo-inositol-3,5-bisphosphate)</name>
        <dbReference type="ChEBI" id="CHEBI:57923"/>
    </ligand>
</feature>
<feature type="binding site" evidence="2">
    <location>
        <position position="381"/>
    </location>
    <ligand>
        <name>a 1,2-diacyl-sn-glycero-3-phospho-(1D-myo-inositol-3-phosphate)</name>
        <dbReference type="ChEBI" id="CHEBI:58088"/>
    </ligand>
</feature>
<feature type="binding site" evidence="2">
    <location>
        <position position="417"/>
    </location>
    <ligand>
        <name>a 1,2-diacyl-sn-glycero-3-phospho-(1D-myo-inositol-3,5-bisphosphate)</name>
        <dbReference type="ChEBI" id="CHEBI:57923"/>
    </ligand>
</feature>
<feature type="binding site" evidence="2">
    <location>
        <position position="421"/>
    </location>
    <ligand>
        <name>a 1,2-diacyl-sn-glycero-3-phospho-(1D-myo-inositol-3,5-bisphosphate)</name>
        <dbReference type="ChEBI" id="CHEBI:57923"/>
    </ligand>
</feature>
<feature type="binding site" evidence="2">
    <location>
        <position position="421"/>
    </location>
    <ligand>
        <name>a 1,2-diacyl-sn-glycero-3-phospho-(1D-myo-inositol-3-phosphate)</name>
        <dbReference type="ChEBI" id="CHEBI:58088"/>
    </ligand>
</feature>
<feature type="modified residue" description="Phosphoserine" evidence="1">
    <location>
        <position position="13"/>
    </location>
</feature>
<feature type="modified residue" description="Phosphoserine" evidence="1">
    <location>
        <position position="18"/>
    </location>
</feature>
<feature type="modified residue" description="Phosphothreonine" evidence="1">
    <location>
        <position position="495"/>
    </location>
</feature>
<feature type="modified residue" description="Phosphoserine" evidence="1">
    <location>
        <position position="588"/>
    </location>
</feature>
<feature type="sequence conflict" description="In Ref. 1; AAC77821." evidence="10" ref="1">
    <original>K</original>
    <variation>Y</variation>
    <location>
        <position position="95"/>
    </location>
</feature>
<organism>
    <name type="scientific">Mus musculus</name>
    <name type="common">Mouse</name>
    <dbReference type="NCBI Taxonomy" id="10090"/>
    <lineage>
        <taxon>Eukaryota</taxon>
        <taxon>Metazoa</taxon>
        <taxon>Chordata</taxon>
        <taxon>Craniata</taxon>
        <taxon>Vertebrata</taxon>
        <taxon>Euteleostomi</taxon>
        <taxon>Mammalia</taxon>
        <taxon>Eutheria</taxon>
        <taxon>Euarchontoglires</taxon>
        <taxon>Glires</taxon>
        <taxon>Rodentia</taxon>
        <taxon>Myomorpha</taxon>
        <taxon>Muroidea</taxon>
        <taxon>Muridae</taxon>
        <taxon>Murinae</taxon>
        <taxon>Mus</taxon>
        <taxon>Mus</taxon>
    </lineage>
</organism>
<gene>
    <name evidence="11" type="primary">Mtm1</name>
</gene>
<proteinExistence type="evidence at protein level"/>
<name>MTM1_MOUSE</name>
<sequence length="603" mass="69559">MASASASKYNSHSLENESIKKVSQDGVSQDVSETVPRLPGELLITEKEVIYICPFNGPIKGRVYITNYRLYLRSLETDSALILDVPLGVISRIEKMGGATSRGENSYGLDITCKDLRNLRFALKQEGHSRRDMFEILVKHAFPLAHNLPLFAFVNEEKFNVDGWTVYNPVEEYRRQGLPNHHWRISFINKCYELCETYPALLVVPYRTSDDDLRRIATFRSRNRLPVLSWIHPENKMVIMRCSQPLVGMSGKRNKDDEKYLDVIRETNKQTSKLMIYDARPSVNAVANKATGGGYESDDAYQNSELSFLDIHNIHVMRESLKKVKDIVYPNIEESHWLSSLESTHWLEHIKLVLTGAIQVADQVSSGKSSVLVHCSDGWDRTAQLTSLAMLMLDSFYRTIEGFEILVQKEWISFGHKFASRIGHGDKNHADADRSPIFLQFIDCVWQMSKQFPTAFEFNEGFLITVLDHLYSCRFGTFLFNCDSARERQKLTERTVSLWSLINSNKDKFKNPFYTKEINRVLYPVASMRHLELWVNYYIRWNPRVKQQQPNPVEQRYMELLALRDDYIKRLEELQLANSAKLADAPASTSSSSQMVPHVQTHF</sequence>
<comment type="function">
    <text evidence="1 6 7 8">Lipid phosphatase which dephosphorylates phosphatidylinositol 3-monophosphate (PI3P) and phosphatidylinositol 3,5-bisphosphate (PI(3,5)P2). Has also been shown to dephosphorylate phosphotyrosine- and phosphoserine-containing peptides. Negatively regulates EGFR degradation through regulation of EGFR trafficking from the late endosome to the lysosome. Plays a role in vacuolar formation and morphology (By similarity). Regulates desmin intermediate filament assembly and architecture. Plays a role in mitochondrial morphology and positioning (PubMed:21135508). Required for skeletal muscle maintenance but not for myogenesis (PubMed:12391329). In skeletal muscles, stabilizes MTMR12 protein levels (PubMed:23818870).</text>
</comment>
<comment type="catalytic activity">
    <reaction evidence="1">
        <text>a 1,2-diacyl-sn-glycero-3-phospho-(1D-myo-inositol-3-phosphate) + H2O = a 1,2-diacyl-sn-glycero-3-phospho-(1D-myo-inositol) + phosphate</text>
        <dbReference type="Rhea" id="RHEA:12316"/>
        <dbReference type="ChEBI" id="CHEBI:15377"/>
        <dbReference type="ChEBI" id="CHEBI:43474"/>
        <dbReference type="ChEBI" id="CHEBI:57880"/>
        <dbReference type="ChEBI" id="CHEBI:58088"/>
    </reaction>
</comment>
<comment type="catalytic activity">
    <reaction evidence="1">
        <text>a 1,2-diacyl-sn-glycero-3-phospho-(1D-myo-inositol-3,5-bisphosphate) + H2O = a 1,2-diacyl-sn-glycero-3-phospho-(1D-myo-inositol-5-phosphate) + phosphate</text>
        <dbReference type="Rhea" id="RHEA:39019"/>
        <dbReference type="ChEBI" id="CHEBI:15377"/>
        <dbReference type="ChEBI" id="CHEBI:43474"/>
        <dbReference type="ChEBI" id="CHEBI:57795"/>
        <dbReference type="ChEBI" id="CHEBI:57923"/>
        <dbReference type="EC" id="3.1.3.95"/>
    </reaction>
</comment>
<comment type="catalytic activity">
    <reaction evidence="1">
        <text>1,2-dioctanoyl-sn-glycero-3-phospho-(1-D-myo-inositol-3-phosphate) + H2O = 1,2-dioctanoyl-sn-glycero-3-phospho-(1D-myo-inositol) + phosphate</text>
        <dbReference type="Rhea" id="RHEA:42328"/>
        <dbReference type="ChEBI" id="CHEBI:15377"/>
        <dbReference type="ChEBI" id="CHEBI:43474"/>
        <dbReference type="ChEBI" id="CHEBI:65221"/>
        <dbReference type="ChEBI" id="CHEBI:78934"/>
    </reaction>
</comment>
<comment type="catalytic activity">
    <reaction evidence="1">
        <text>1,2-dioctanoyl-sn-glycero-3-phospho-(1D-myo-inositol-3,5-bisphosphate) + H2O = 1,2-dioctanoyl-sn-glycero-3-phospho-(1D-myo-inositol-5-phosphate) + phosphate</text>
        <dbReference type="Rhea" id="RHEA:45632"/>
        <dbReference type="ChEBI" id="CHEBI:15377"/>
        <dbReference type="ChEBI" id="CHEBI:43474"/>
        <dbReference type="ChEBI" id="CHEBI:78911"/>
        <dbReference type="ChEBI" id="CHEBI:85342"/>
    </reaction>
</comment>
<comment type="catalytic activity">
    <reaction evidence="1">
        <text>1,2-dihexadecanoyl-sn-glycero-3-phospho-(1D-myo-inositol-3,5-phosphate) + H2O = 1,2-dihexadecanoyl-sn-glycero-3-phospho-(1D-myo-inositol-5-phosphate) + phosphate</text>
        <dbReference type="Rhea" id="RHEA:45636"/>
        <dbReference type="ChEBI" id="CHEBI:15377"/>
        <dbReference type="ChEBI" id="CHEBI:43474"/>
        <dbReference type="ChEBI" id="CHEBI:78994"/>
        <dbReference type="ChEBI" id="CHEBI:84968"/>
    </reaction>
</comment>
<comment type="activity regulation">
    <text evidence="1">Allosterically activated by phosphatidylinositol 5-phosphate (PI5P).</text>
</comment>
<comment type="subunit">
    <text evidence="1 7 8">Heterodimer with MTMR12 (PubMed:23818870). Interacts with KMT2A/MLL1 (via SET domain) (By similarity). Interacts with DES in skeletal muscle but not in cardiac muscle (PubMed:21135508). Interacts with SPEG (By similarity).</text>
</comment>
<comment type="interaction">
    <interactant intactId="EBI-6861578">
        <id>Q9Z2C5</id>
    </interactant>
    <interactant intactId="EBI-775152">
        <id>O08539</id>
        <label>Bin1</label>
    </interactant>
    <organismsDiffer>false</organismsDiffer>
    <experiments>3</experiments>
</comment>
<comment type="interaction">
    <interactant intactId="EBI-6861578">
        <id>Q9Z2C5</id>
    </interactant>
    <interactant intactId="EBI-298565">
        <id>P31001</id>
        <label>Des</label>
    </interactant>
    <organismsDiffer>false</organismsDiffer>
    <experiments>4</experiments>
</comment>
<comment type="subcellular location">
    <subcellularLocation>
        <location evidence="5">Cytoplasm</location>
    </subcellularLocation>
    <subcellularLocation>
        <location evidence="1">Cell membrane</location>
        <topology evidence="1">Peripheral membrane protein</topology>
    </subcellularLocation>
    <subcellularLocation>
        <location evidence="5">Cell projection</location>
        <location evidence="5">Filopodium</location>
    </subcellularLocation>
    <subcellularLocation>
        <location evidence="5">Cell projection</location>
        <location evidence="5">Ruffle</location>
    </subcellularLocation>
    <subcellularLocation>
        <location evidence="1">Late endosome</location>
    </subcellularLocation>
    <subcellularLocation>
        <location evidence="8">Cytoplasm</location>
        <location evidence="8">Myofibril</location>
        <location evidence="8">Sarcomere</location>
    </subcellularLocation>
    <text evidence="1 8">Localizes as a dense cytoplasmic network. Also localizes to the plasma membrane, including plasma membrane extensions such as filopodia and ruffles. Predominantly located in the cytoplasm following interaction with MTMR12. Recruited to the late endosome following EGF stimulation (By similarity). In skeletal muscles, co-localizes with MTMR12 in the sarcomere (PubMed:23818870).</text>
</comment>
<comment type="tissue specificity">
    <text evidence="5 8">Widely expressed with highest levels detected in heart and muscle and low levels in brain (at protein level) (PubMed:12118066). Expressed in skeletal muscles (at protein level) (PubMed:23818870).</text>
</comment>
<comment type="developmental stage">
    <text evidence="8">Expression increases during skeletal muscle cell differentiation.</text>
</comment>
<comment type="domain">
    <text evidence="1">The GRAM domain mediates binding to PI(3,5)P2 and, with lower affinity, to other phosphoinositides.</text>
</comment>
<comment type="disruption phenotype">
    <text evidence="6 7">Mice are viable although lifespan is severely reduced. An under-representation of mutant males suggests some prenatal lethality. Generalized and progressive myopathy starts at around 4 weeks of age with amyotrophy and accumulation of central nuclei in skeletal muscle fibers, leading to death at 6-14 weeks. Mutants also show mitochondrial disorganization and increased levels of desmin with abnormal desmin intermediate filament formation and architecture.</text>
</comment>
<comment type="similarity">
    <text evidence="10">Belongs to the protein-tyrosine phosphatase family. Non-receptor class myotubularin subfamily.</text>
</comment>